<comment type="function">
    <text>Marginally higher substrate specificity for L-DOPA over L-tyrosine.</text>
</comment>
<comment type="catalytic activity">
    <reaction>
        <text>L-tyrosine + H(+) = tyramine + CO2</text>
        <dbReference type="Rhea" id="RHEA:14345"/>
        <dbReference type="ChEBI" id="CHEBI:15378"/>
        <dbReference type="ChEBI" id="CHEBI:16526"/>
        <dbReference type="ChEBI" id="CHEBI:58315"/>
        <dbReference type="ChEBI" id="CHEBI:327995"/>
        <dbReference type="EC" id="4.1.1.25"/>
    </reaction>
</comment>
<comment type="catalytic activity">
    <reaction>
        <text>L-dopa + H(+) = dopamine + CO2</text>
        <dbReference type="Rhea" id="RHEA:12272"/>
        <dbReference type="ChEBI" id="CHEBI:15378"/>
        <dbReference type="ChEBI" id="CHEBI:16526"/>
        <dbReference type="ChEBI" id="CHEBI:57504"/>
        <dbReference type="ChEBI" id="CHEBI:59905"/>
        <dbReference type="EC" id="4.1.1.28"/>
    </reaction>
</comment>
<comment type="catalytic activity">
    <reaction>
        <text>5-hydroxy-L-tryptophan + H(+) = serotonin + CO2</text>
        <dbReference type="Rhea" id="RHEA:18533"/>
        <dbReference type="ChEBI" id="CHEBI:15378"/>
        <dbReference type="ChEBI" id="CHEBI:16526"/>
        <dbReference type="ChEBI" id="CHEBI:58266"/>
        <dbReference type="ChEBI" id="CHEBI:350546"/>
        <dbReference type="EC" id="4.1.1.28"/>
    </reaction>
</comment>
<comment type="cofactor">
    <cofactor>
        <name>pyridoxal 5'-phosphate</name>
        <dbReference type="ChEBI" id="CHEBI:597326"/>
    </cofactor>
</comment>
<comment type="subunit">
    <text evidence="1">Homodimer.</text>
</comment>
<comment type="tissue specificity">
    <text>Predominantly expressed in the roots and stems, while a lower level expression is seen in the sepals and carpels of fully expanded flowers.</text>
</comment>
<comment type="similarity">
    <text evidence="2">Belongs to the group II decarboxylase family.</text>
</comment>
<name>TYDC2_PAPSO</name>
<protein>
    <recommendedName>
        <fullName>Tyrosine/DOPA decarboxylase 2</fullName>
    </recommendedName>
    <domain>
        <recommendedName>
            <fullName>DOPA decarboxylase</fullName>
            <shortName>DDC</shortName>
            <ecNumber>4.1.1.28</ecNumber>
        </recommendedName>
    </domain>
    <domain>
        <recommendedName>
            <fullName>Tyrosine decarboxylase</fullName>
            <ecNumber>4.1.1.25</ecNumber>
        </recommendedName>
    </domain>
</protein>
<organism>
    <name type="scientific">Papaver somniferum</name>
    <name type="common">Opium poppy</name>
    <dbReference type="NCBI Taxonomy" id="3469"/>
    <lineage>
        <taxon>Eukaryota</taxon>
        <taxon>Viridiplantae</taxon>
        <taxon>Streptophyta</taxon>
        <taxon>Embryophyta</taxon>
        <taxon>Tracheophyta</taxon>
        <taxon>Spermatophyta</taxon>
        <taxon>Magnoliopsida</taxon>
        <taxon>Ranunculales</taxon>
        <taxon>Papaveraceae</taxon>
        <taxon>Papaveroideae</taxon>
        <taxon>Papaver</taxon>
    </lineage>
</organism>
<dbReference type="EC" id="4.1.1.28"/>
<dbReference type="EC" id="4.1.1.25"/>
<dbReference type="EMBL" id="U08598">
    <property type="protein sequence ID" value="AAA62347.1"/>
    <property type="molecule type" value="mRNA"/>
</dbReference>
<dbReference type="PIR" id="B55066">
    <property type="entry name" value="B55066"/>
</dbReference>
<dbReference type="PDB" id="6LIU">
    <property type="method" value="X-ray"/>
    <property type="resolution" value="2.80 A"/>
    <property type="chains" value="A/B/C/D/E/F=1-531"/>
</dbReference>
<dbReference type="PDB" id="6LIV">
    <property type="method" value="X-ray"/>
    <property type="resolution" value="2.31 A"/>
    <property type="chains" value="A/B/C/D/E/F=1-531"/>
</dbReference>
<dbReference type="PDB" id="8X0O">
    <property type="method" value="X-ray"/>
    <property type="resolution" value="3.35 A"/>
    <property type="chains" value="A/B/C/D/E/F=1-531"/>
</dbReference>
<dbReference type="PDB" id="8X0P">
    <property type="method" value="X-ray"/>
    <property type="resolution" value="3.35 A"/>
    <property type="chains" value="A/B/C/D/E/F=1-531"/>
</dbReference>
<dbReference type="PDBsum" id="6LIU"/>
<dbReference type="PDBsum" id="6LIV"/>
<dbReference type="PDBsum" id="8X0O"/>
<dbReference type="PDBsum" id="8X0P"/>
<dbReference type="SMR" id="P54769"/>
<dbReference type="EnsemblPlants" id="RZC68564">
    <property type="protein sequence ID" value="RZC68564"/>
    <property type="gene ID" value="C5167_031851"/>
</dbReference>
<dbReference type="Gramene" id="RZC68564">
    <property type="protein sequence ID" value="RZC68564"/>
    <property type="gene ID" value="C5167_031851"/>
</dbReference>
<dbReference type="OMA" id="CERENMW"/>
<dbReference type="OrthoDB" id="639767at2759"/>
<dbReference type="GO" id="GO:0005737">
    <property type="term" value="C:cytoplasm"/>
    <property type="evidence" value="ECO:0007669"/>
    <property type="project" value="TreeGrafter"/>
</dbReference>
<dbReference type="GO" id="GO:0036467">
    <property type="term" value="F:5-hydroxy-L-tryptophan decarboxylase activity"/>
    <property type="evidence" value="ECO:0007669"/>
    <property type="project" value="RHEA"/>
</dbReference>
<dbReference type="GO" id="GO:0036468">
    <property type="term" value="F:L-dopa decarboxylase activity"/>
    <property type="evidence" value="ECO:0007669"/>
    <property type="project" value="RHEA"/>
</dbReference>
<dbReference type="GO" id="GO:0030170">
    <property type="term" value="F:pyridoxal phosphate binding"/>
    <property type="evidence" value="ECO:0007669"/>
    <property type="project" value="InterPro"/>
</dbReference>
<dbReference type="GO" id="GO:0004837">
    <property type="term" value="F:tyrosine decarboxylase activity"/>
    <property type="evidence" value="ECO:0007669"/>
    <property type="project" value="UniProtKB-EC"/>
</dbReference>
<dbReference type="GO" id="GO:0006520">
    <property type="term" value="P:amino acid metabolic process"/>
    <property type="evidence" value="ECO:0007669"/>
    <property type="project" value="InterPro"/>
</dbReference>
<dbReference type="GO" id="GO:0019752">
    <property type="term" value="P:carboxylic acid metabolic process"/>
    <property type="evidence" value="ECO:0007669"/>
    <property type="project" value="InterPro"/>
</dbReference>
<dbReference type="CDD" id="cd06450">
    <property type="entry name" value="DOPA_deC_like"/>
    <property type="match status" value="1"/>
</dbReference>
<dbReference type="FunFam" id="1.20.1340.10:FF:000001">
    <property type="entry name" value="Histidine decarboxylase"/>
    <property type="match status" value="1"/>
</dbReference>
<dbReference type="FunFam" id="3.40.640.10:FF:000025">
    <property type="entry name" value="Histidine decarboxylase"/>
    <property type="match status" value="1"/>
</dbReference>
<dbReference type="Gene3D" id="3.90.1150.10">
    <property type="entry name" value="Aspartate Aminotransferase, domain 1"/>
    <property type="match status" value="1"/>
</dbReference>
<dbReference type="Gene3D" id="1.20.1340.10">
    <property type="entry name" value="dopa decarboxylase, N-terminal domain"/>
    <property type="match status" value="1"/>
</dbReference>
<dbReference type="Gene3D" id="3.40.640.10">
    <property type="entry name" value="Type I PLP-dependent aspartate aminotransferase-like (Major domain)"/>
    <property type="match status" value="1"/>
</dbReference>
<dbReference type="InterPro" id="IPR010977">
    <property type="entry name" value="Aromatic_deC"/>
</dbReference>
<dbReference type="InterPro" id="IPR002129">
    <property type="entry name" value="PyrdxlP-dep_de-COase"/>
</dbReference>
<dbReference type="InterPro" id="IPR015424">
    <property type="entry name" value="PyrdxlP-dep_Trfase"/>
</dbReference>
<dbReference type="InterPro" id="IPR015421">
    <property type="entry name" value="PyrdxlP-dep_Trfase_major"/>
</dbReference>
<dbReference type="InterPro" id="IPR015422">
    <property type="entry name" value="PyrdxlP-dep_Trfase_small"/>
</dbReference>
<dbReference type="InterPro" id="IPR021115">
    <property type="entry name" value="Pyridoxal-P_BS"/>
</dbReference>
<dbReference type="PANTHER" id="PTHR11999">
    <property type="entry name" value="GROUP II PYRIDOXAL-5-PHOSPHATE DECARBOXYLASE"/>
    <property type="match status" value="1"/>
</dbReference>
<dbReference type="PANTHER" id="PTHR11999:SF96">
    <property type="entry name" value="TYROSINE DECARBOXYLASE"/>
    <property type="match status" value="1"/>
</dbReference>
<dbReference type="Pfam" id="PF00282">
    <property type="entry name" value="Pyridoxal_deC"/>
    <property type="match status" value="1"/>
</dbReference>
<dbReference type="PRINTS" id="PR00800">
    <property type="entry name" value="YHDCRBOXLASE"/>
</dbReference>
<dbReference type="SUPFAM" id="SSF53383">
    <property type="entry name" value="PLP-dependent transferases"/>
    <property type="match status" value="1"/>
</dbReference>
<dbReference type="PROSITE" id="PS00392">
    <property type="entry name" value="DDC_GAD_HDC_YDC"/>
    <property type="match status" value="1"/>
</dbReference>
<reference key="1">
    <citation type="journal article" date="1994" name="J. Biol. Chem.">
        <title>Differential and tissue-specific expression of a gene family for tyrosine/dopa decarboxylase in opium poppy.</title>
        <authorList>
            <person name="Facchini P.J."/>
            <person name="de Luca V."/>
        </authorList>
    </citation>
    <scope>NUCLEOTIDE SEQUENCE [MRNA]</scope>
    <source>
        <strain>cv. Marianne</strain>
    </source>
</reference>
<accession>P54769</accession>
<proteinExistence type="evidence at protein level"/>
<sequence>MGSLNTEDVLENSSAFGVTNPLDPEEFRRQGHMIIDFLADYYRDVEKYPVRSQVEPGYLRKRLPETAPYNPESIETILQDVTTEIIPGLTHWQSPNYYAYFPSSGSVAGFLGEMLSTGFNVVGFNWMSSPAATELESVVMDWFGKMLNLPESFLFSGSGGGVLQGTSCEAILCTLTAARDRKLNKIGREHIGRLVVYGSDQTHCALQKAAQVAGINPKNFRAIKTFKENSFGLSAATLREVILEDIEAGLIPLFVCPTVGTTSSTAVDPISPICEVAKEYEMWVHVDAAYAGSACICPEFRHFIDGVEEADSFSLNAHKWFFTTLDCCCLWVKDPSALVKALSTNPEYLRNKATESRQVVDYKDWQIALSRRFRSLKLWMVLRSYGVTNLRNFLRSHVKMAKTFEGLICMDGRFEITVPRTFAMVCFRLLPPKTIKVYDNGVHQNGNGVVPLRDENENLVLANKLNQVYLETVNATGSVYMTHAVVGGVYMIRFAVGSTLTEERHVIYAWKILQEHADLILGKFSEADFSS</sequence>
<keyword id="KW-0002">3D-structure</keyword>
<keyword id="KW-0210">Decarboxylase</keyword>
<keyword id="KW-0456">Lyase</keyword>
<keyword id="KW-0663">Pyridoxal phosphate</keyword>
<gene>
    <name type="primary">TYDC2</name>
</gene>
<evidence type="ECO:0000250" key="1"/>
<evidence type="ECO:0000305" key="2"/>
<evidence type="ECO:0007829" key="3">
    <source>
        <dbReference type="PDB" id="6LIU"/>
    </source>
</evidence>
<evidence type="ECO:0007829" key="4">
    <source>
        <dbReference type="PDB" id="6LIV"/>
    </source>
</evidence>
<feature type="chain" id="PRO_0000147000" description="Tyrosine/DOPA decarboxylase 2">
    <location>
        <begin position="1"/>
        <end position="531"/>
    </location>
</feature>
<feature type="modified residue" description="N6-(pyridoxal phosphate)lysine" evidence="1">
    <location>
        <position position="319"/>
    </location>
</feature>
<feature type="helix" evidence="4">
    <location>
        <begin position="24"/>
        <end position="44"/>
    </location>
</feature>
<feature type="helix" evidence="4">
    <location>
        <begin position="45"/>
        <end position="47"/>
    </location>
</feature>
<feature type="helix" evidence="4">
    <location>
        <begin position="58"/>
        <end position="62"/>
    </location>
</feature>
<feature type="helix" evidence="4">
    <location>
        <begin position="74"/>
        <end position="83"/>
    </location>
</feature>
<feature type="helix" evidence="4">
    <location>
        <begin position="86"/>
        <end position="88"/>
    </location>
</feature>
<feature type="strand" evidence="4">
    <location>
        <begin position="99"/>
        <end position="101"/>
    </location>
</feature>
<feature type="helix" evidence="4">
    <location>
        <begin position="107"/>
        <end position="119"/>
    </location>
</feature>
<feature type="turn" evidence="4">
    <location>
        <begin position="126"/>
        <end position="128"/>
    </location>
</feature>
<feature type="helix" evidence="4">
    <location>
        <begin position="130"/>
        <end position="146"/>
    </location>
</feature>
<feature type="helix" evidence="4">
    <location>
        <begin position="151"/>
        <end position="153"/>
    </location>
</feature>
<feature type="turn" evidence="4">
    <location>
        <begin position="155"/>
        <end position="158"/>
    </location>
</feature>
<feature type="strand" evidence="4">
    <location>
        <begin position="160"/>
        <end position="165"/>
    </location>
</feature>
<feature type="helix" evidence="4">
    <location>
        <begin position="167"/>
        <end position="186"/>
    </location>
</feature>
<feature type="helix" evidence="4">
    <location>
        <begin position="188"/>
        <end position="193"/>
    </location>
</feature>
<feature type="strand" evidence="4">
    <location>
        <begin position="194"/>
        <end position="199"/>
    </location>
</feature>
<feature type="helix" evidence="4">
    <location>
        <begin position="204"/>
        <end position="212"/>
    </location>
</feature>
<feature type="helix" evidence="4">
    <location>
        <begin position="217"/>
        <end position="219"/>
    </location>
</feature>
<feature type="strand" evidence="4">
    <location>
        <begin position="220"/>
        <end position="223"/>
    </location>
</feature>
<feature type="helix" evidence="4">
    <location>
        <begin position="227"/>
        <end position="229"/>
    </location>
</feature>
<feature type="helix" evidence="4">
    <location>
        <begin position="235"/>
        <end position="247"/>
    </location>
</feature>
<feature type="strand" evidence="4">
    <location>
        <begin position="251"/>
        <end position="255"/>
    </location>
</feature>
<feature type="strand" evidence="4">
    <location>
        <begin position="258"/>
        <end position="260"/>
    </location>
</feature>
<feature type="turn" evidence="4">
    <location>
        <begin position="262"/>
        <end position="264"/>
    </location>
</feature>
<feature type="helix" evidence="4">
    <location>
        <begin position="270"/>
        <end position="279"/>
    </location>
</feature>
<feature type="strand" evidence="4">
    <location>
        <begin position="283"/>
        <end position="287"/>
    </location>
</feature>
<feature type="helix" evidence="4">
    <location>
        <begin position="291"/>
        <end position="296"/>
    </location>
</feature>
<feature type="helix" evidence="4">
    <location>
        <begin position="298"/>
        <end position="304"/>
    </location>
</feature>
<feature type="helix" evidence="4">
    <location>
        <begin position="307"/>
        <end position="309"/>
    </location>
</feature>
<feature type="strand" evidence="4">
    <location>
        <begin position="311"/>
        <end position="316"/>
    </location>
</feature>
<feature type="helix" evidence="3">
    <location>
        <begin position="317"/>
        <end position="320"/>
    </location>
</feature>
<feature type="strand" evidence="4">
    <location>
        <begin position="328"/>
        <end position="333"/>
    </location>
</feature>
<feature type="helix" evidence="4">
    <location>
        <begin position="335"/>
        <end position="342"/>
    </location>
</feature>
<feature type="helix" evidence="4">
    <location>
        <begin position="347"/>
        <end position="350"/>
    </location>
</feature>
<feature type="helix" evidence="4">
    <location>
        <begin position="362"/>
        <end position="365"/>
    </location>
</feature>
<feature type="helix" evidence="4">
    <location>
        <begin position="375"/>
        <end position="410"/>
    </location>
</feature>
<feature type="strand" evidence="4">
    <location>
        <begin position="414"/>
        <end position="416"/>
    </location>
</feature>
<feature type="strand" evidence="4">
    <location>
        <begin position="422"/>
        <end position="429"/>
    </location>
</feature>
<feature type="helix" evidence="4">
    <location>
        <begin position="458"/>
        <end position="475"/>
    </location>
</feature>
<feature type="strand" evidence="4">
    <location>
        <begin position="483"/>
        <end position="486"/>
    </location>
</feature>
<feature type="strand" evidence="4">
    <location>
        <begin position="489"/>
        <end position="495"/>
    </location>
</feature>
<feature type="helix" evidence="4">
    <location>
        <begin position="503"/>
        <end position="522"/>
    </location>
</feature>
<feature type="helix" evidence="4">
    <location>
        <begin position="526"/>
        <end position="528"/>
    </location>
</feature>